<evidence type="ECO:0000255" key="1">
    <source>
        <dbReference type="HAMAP-Rule" id="MF_01724"/>
    </source>
</evidence>
<reference key="1">
    <citation type="journal article" date="2001" name="Proc. Natl. Acad. Sci. U.S.A.">
        <title>Genome sequence of an industrial microorganism Streptomyces avermitilis: deducing the ability of producing secondary metabolites.</title>
        <authorList>
            <person name="Omura S."/>
            <person name="Ikeda H."/>
            <person name="Ishikawa J."/>
            <person name="Hanamoto A."/>
            <person name="Takahashi C."/>
            <person name="Shinose M."/>
            <person name="Takahashi Y."/>
            <person name="Horikawa H."/>
            <person name="Nakazawa H."/>
            <person name="Osonoe T."/>
            <person name="Kikuchi H."/>
            <person name="Shiba T."/>
            <person name="Sakaki Y."/>
            <person name="Hattori M."/>
        </authorList>
    </citation>
    <scope>NUCLEOTIDE SEQUENCE [LARGE SCALE GENOMIC DNA]</scope>
    <source>
        <strain>ATCC 31267 / DSM 46492 / JCM 5070 / NBRC 14893 / NCIMB 12804 / NRRL 8165 / MA-4680</strain>
    </source>
</reference>
<reference key="2">
    <citation type="journal article" date="2003" name="Nat. Biotechnol.">
        <title>Complete genome sequence and comparative analysis of the industrial microorganism Streptomyces avermitilis.</title>
        <authorList>
            <person name="Ikeda H."/>
            <person name="Ishikawa J."/>
            <person name="Hanamoto A."/>
            <person name="Shinose M."/>
            <person name="Kikuchi H."/>
            <person name="Shiba T."/>
            <person name="Sakaki Y."/>
            <person name="Hattori M."/>
            <person name="Omura S."/>
        </authorList>
    </citation>
    <scope>NUCLEOTIDE SEQUENCE [LARGE SCALE GENOMIC DNA]</scope>
    <source>
        <strain>ATCC 31267 / DSM 46492 / JCM 5070 / NBRC 14893 / NCIMB 12804 / NRRL 8165 / MA-4680</strain>
    </source>
</reference>
<proteinExistence type="inferred from homology"/>
<sequence>MATHTEQLTRPAVRLQGLTRSFADRTVLDGIDLDLPAGQFTALLGHSGSGKSTLLRAVAGLDHEVTGSGQLTAPERVSVVFQDSRLLPWRRVLDNVLLGTDGKEAAERGRAALAEVGLAGRERAWPGELSGGEAQRAALARSLVREPELLLADEPFGALDALTRIRMHTLLRELWERHRPSVLLVTHDVDEAIVLADRVLVLERGRIGLDLTIDRPHPRSYRDPLLGEYRERLLTALGVTEHQGAQEDHQ</sequence>
<protein>
    <recommendedName>
        <fullName evidence="1">Aliphatic sulfonates import ATP-binding protein SsuB 2</fullName>
        <ecNumber evidence="1">7.6.2.14</ecNumber>
    </recommendedName>
</protein>
<dbReference type="EC" id="7.6.2.14" evidence="1"/>
<dbReference type="EMBL" id="BA000030">
    <property type="protein sequence ID" value="BAC73129.1"/>
    <property type="molecule type" value="Genomic_DNA"/>
</dbReference>
<dbReference type="RefSeq" id="WP_010986820.1">
    <property type="nucleotide sequence ID" value="NZ_JZJK01000066.1"/>
</dbReference>
<dbReference type="SMR" id="Q82CD3"/>
<dbReference type="GeneID" id="41542509"/>
<dbReference type="KEGG" id="sma:SAVERM_5417"/>
<dbReference type="eggNOG" id="COG1116">
    <property type="taxonomic scope" value="Bacteria"/>
</dbReference>
<dbReference type="HOGENOM" id="CLU_000604_1_22_11"/>
<dbReference type="OrthoDB" id="4310860at2"/>
<dbReference type="Proteomes" id="UP000000428">
    <property type="component" value="Chromosome"/>
</dbReference>
<dbReference type="GO" id="GO:0005886">
    <property type="term" value="C:plasma membrane"/>
    <property type="evidence" value="ECO:0007669"/>
    <property type="project" value="UniProtKB-SubCell"/>
</dbReference>
<dbReference type="GO" id="GO:0005524">
    <property type="term" value="F:ATP binding"/>
    <property type="evidence" value="ECO:0007669"/>
    <property type="project" value="UniProtKB-KW"/>
</dbReference>
<dbReference type="GO" id="GO:0016887">
    <property type="term" value="F:ATP hydrolysis activity"/>
    <property type="evidence" value="ECO:0007669"/>
    <property type="project" value="InterPro"/>
</dbReference>
<dbReference type="Gene3D" id="3.40.50.300">
    <property type="entry name" value="P-loop containing nucleotide triphosphate hydrolases"/>
    <property type="match status" value="1"/>
</dbReference>
<dbReference type="InterPro" id="IPR003593">
    <property type="entry name" value="AAA+_ATPase"/>
</dbReference>
<dbReference type="InterPro" id="IPR003439">
    <property type="entry name" value="ABC_transporter-like_ATP-bd"/>
</dbReference>
<dbReference type="InterPro" id="IPR017871">
    <property type="entry name" value="ABC_transporter-like_CS"/>
</dbReference>
<dbReference type="InterPro" id="IPR050166">
    <property type="entry name" value="ABC_transporter_ATP-bind"/>
</dbReference>
<dbReference type="InterPro" id="IPR027417">
    <property type="entry name" value="P-loop_NTPase"/>
</dbReference>
<dbReference type="PANTHER" id="PTHR42788:SF17">
    <property type="entry name" value="ALIPHATIC SULFONATES IMPORT ATP-BINDING PROTEIN SSUB"/>
    <property type="match status" value="1"/>
</dbReference>
<dbReference type="PANTHER" id="PTHR42788">
    <property type="entry name" value="TAURINE IMPORT ATP-BINDING PROTEIN-RELATED"/>
    <property type="match status" value="1"/>
</dbReference>
<dbReference type="Pfam" id="PF00005">
    <property type="entry name" value="ABC_tran"/>
    <property type="match status" value="1"/>
</dbReference>
<dbReference type="SMART" id="SM00382">
    <property type="entry name" value="AAA"/>
    <property type="match status" value="1"/>
</dbReference>
<dbReference type="SUPFAM" id="SSF52540">
    <property type="entry name" value="P-loop containing nucleoside triphosphate hydrolases"/>
    <property type="match status" value="1"/>
</dbReference>
<dbReference type="PROSITE" id="PS00211">
    <property type="entry name" value="ABC_TRANSPORTER_1"/>
    <property type="match status" value="1"/>
</dbReference>
<dbReference type="PROSITE" id="PS50893">
    <property type="entry name" value="ABC_TRANSPORTER_2"/>
    <property type="match status" value="1"/>
</dbReference>
<dbReference type="PROSITE" id="PS51291">
    <property type="entry name" value="SSUB"/>
    <property type="match status" value="1"/>
</dbReference>
<gene>
    <name evidence="1" type="primary">ssuB2</name>
    <name type="ordered locus">SAV_5417</name>
</gene>
<name>SSUB2_STRAW</name>
<accession>Q82CD3</accession>
<feature type="chain" id="PRO_0000279964" description="Aliphatic sulfonates import ATP-binding protein SsuB 2">
    <location>
        <begin position="1"/>
        <end position="250"/>
    </location>
</feature>
<feature type="domain" description="ABC transporter" evidence="1">
    <location>
        <begin position="13"/>
        <end position="229"/>
    </location>
</feature>
<feature type="binding site" evidence="1">
    <location>
        <begin position="45"/>
        <end position="52"/>
    </location>
    <ligand>
        <name>ATP</name>
        <dbReference type="ChEBI" id="CHEBI:30616"/>
    </ligand>
</feature>
<comment type="function">
    <text evidence="1">Part of the ABC transporter complex SsuABC involved in aliphatic sulfonates import. Responsible for energy coupling to the transport system.</text>
</comment>
<comment type="catalytic activity">
    <reaction evidence="1">
        <text>ATP + H2O + aliphatic sulfonate-[sulfonate-binding protein]Side 1 = ADP + phosphate + aliphatic sulfonateSide 2 + [sulfonate-binding protein]Side 1.</text>
        <dbReference type="EC" id="7.6.2.14"/>
    </reaction>
</comment>
<comment type="subunit">
    <text evidence="1">The complex is composed of two ATP-binding proteins (SsuB), two transmembrane proteins (SsuC) and a solute-binding protein (SsuA).</text>
</comment>
<comment type="subcellular location">
    <subcellularLocation>
        <location evidence="1">Cell membrane</location>
        <topology evidence="1">Peripheral membrane protein</topology>
    </subcellularLocation>
</comment>
<comment type="similarity">
    <text evidence="1">Belongs to the ABC transporter superfamily. Aliphatic sulfonates importer (TC 3.A.1.17.2) family.</text>
</comment>
<organism>
    <name type="scientific">Streptomyces avermitilis (strain ATCC 31267 / DSM 46492 / JCM 5070 / NBRC 14893 / NCIMB 12804 / NRRL 8165 / MA-4680)</name>
    <dbReference type="NCBI Taxonomy" id="227882"/>
    <lineage>
        <taxon>Bacteria</taxon>
        <taxon>Bacillati</taxon>
        <taxon>Actinomycetota</taxon>
        <taxon>Actinomycetes</taxon>
        <taxon>Kitasatosporales</taxon>
        <taxon>Streptomycetaceae</taxon>
        <taxon>Streptomyces</taxon>
    </lineage>
</organism>
<keyword id="KW-0067">ATP-binding</keyword>
<keyword id="KW-1003">Cell membrane</keyword>
<keyword id="KW-0472">Membrane</keyword>
<keyword id="KW-0547">Nucleotide-binding</keyword>
<keyword id="KW-1185">Reference proteome</keyword>
<keyword id="KW-1278">Translocase</keyword>
<keyword id="KW-0813">Transport</keyword>